<evidence type="ECO:0000255" key="1">
    <source>
        <dbReference type="HAMAP-Rule" id="MF_01369"/>
    </source>
</evidence>
<evidence type="ECO:0000305" key="2"/>
<keyword id="KW-0687">Ribonucleoprotein</keyword>
<keyword id="KW-0689">Ribosomal protein</keyword>
<keyword id="KW-0694">RNA-binding</keyword>
<keyword id="KW-0699">rRNA-binding</keyword>
<organism>
    <name type="scientific">Streptococcus pneumoniae serotype 19F (strain G54)</name>
    <dbReference type="NCBI Taxonomy" id="512566"/>
    <lineage>
        <taxon>Bacteria</taxon>
        <taxon>Bacillati</taxon>
        <taxon>Bacillota</taxon>
        <taxon>Bacilli</taxon>
        <taxon>Lactobacillales</taxon>
        <taxon>Streptococcaceae</taxon>
        <taxon>Streptococcus</taxon>
    </lineage>
</organism>
<name>RL23_STRP4</name>
<sequence length="98" mass="10786">MNLYDVIKKPVITESSMAQLEAGKYVFEVDTRAHKLLIKQAVEAAFEGVKVANVNTINVKPKAKRVGRYTGFTNKTKKAIITLTADSKAIELFAAEAE</sequence>
<comment type="function">
    <text evidence="1">One of the early assembly proteins it binds 23S rRNA. One of the proteins that surrounds the polypeptide exit tunnel on the outside of the ribosome. Forms the main docking site for trigger factor binding to the ribosome.</text>
</comment>
<comment type="subunit">
    <text evidence="1">Part of the 50S ribosomal subunit. Contacts protein L29, and trigger factor when it is bound to the ribosome.</text>
</comment>
<comment type="similarity">
    <text evidence="1">Belongs to the universal ribosomal protein uL23 family.</text>
</comment>
<dbReference type="EMBL" id="CP001015">
    <property type="protein sequence ID" value="ACF55860.1"/>
    <property type="molecule type" value="Genomic_DNA"/>
</dbReference>
<dbReference type="SMR" id="B5E6F7"/>
<dbReference type="KEGG" id="spx:SPG_0197"/>
<dbReference type="HOGENOM" id="CLU_037562_3_2_9"/>
<dbReference type="GO" id="GO:1990904">
    <property type="term" value="C:ribonucleoprotein complex"/>
    <property type="evidence" value="ECO:0007669"/>
    <property type="project" value="UniProtKB-KW"/>
</dbReference>
<dbReference type="GO" id="GO:0005840">
    <property type="term" value="C:ribosome"/>
    <property type="evidence" value="ECO:0007669"/>
    <property type="project" value="UniProtKB-KW"/>
</dbReference>
<dbReference type="GO" id="GO:0019843">
    <property type="term" value="F:rRNA binding"/>
    <property type="evidence" value="ECO:0007669"/>
    <property type="project" value="UniProtKB-UniRule"/>
</dbReference>
<dbReference type="GO" id="GO:0003735">
    <property type="term" value="F:structural constituent of ribosome"/>
    <property type="evidence" value="ECO:0007669"/>
    <property type="project" value="InterPro"/>
</dbReference>
<dbReference type="GO" id="GO:0006412">
    <property type="term" value="P:translation"/>
    <property type="evidence" value="ECO:0007669"/>
    <property type="project" value="UniProtKB-UniRule"/>
</dbReference>
<dbReference type="FunFam" id="3.30.70.330:FF:000001">
    <property type="entry name" value="50S ribosomal protein L23"/>
    <property type="match status" value="1"/>
</dbReference>
<dbReference type="Gene3D" id="3.30.70.330">
    <property type="match status" value="1"/>
</dbReference>
<dbReference type="HAMAP" id="MF_01369_B">
    <property type="entry name" value="Ribosomal_uL23_B"/>
    <property type="match status" value="1"/>
</dbReference>
<dbReference type="InterPro" id="IPR012677">
    <property type="entry name" value="Nucleotide-bd_a/b_plait_sf"/>
</dbReference>
<dbReference type="InterPro" id="IPR013025">
    <property type="entry name" value="Ribosomal_uL23-like"/>
</dbReference>
<dbReference type="InterPro" id="IPR012678">
    <property type="entry name" value="Ribosomal_uL23/eL15/eS24_sf"/>
</dbReference>
<dbReference type="InterPro" id="IPR001014">
    <property type="entry name" value="Ribosomal_uL23_CS"/>
</dbReference>
<dbReference type="NCBIfam" id="NF004361">
    <property type="entry name" value="PRK05738.2-1"/>
    <property type="match status" value="1"/>
</dbReference>
<dbReference type="NCBIfam" id="NF004363">
    <property type="entry name" value="PRK05738.2-4"/>
    <property type="match status" value="1"/>
</dbReference>
<dbReference type="PANTHER" id="PTHR11620">
    <property type="entry name" value="60S RIBOSOMAL PROTEIN L23A"/>
    <property type="match status" value="1"/>
</dbReference>
<dbReference type="Pfam" id="PF00276">
    <property type="entry name" value="Ribosomal_L23"/>
    <property type="match status" value="1"/>
</dbReference>
<dbReference type="SUPFAM" id="SSF54189">
    <property type="entry name" value="Ribosomal proteins S24e, L23 and L15e"/>
    <property type="match status" value="1"/>
</dbReference>
<dbReference type="PROSITE" id="PS00050">
    <property type="entry name" value="RIBOSOMAL_L23"/>
    <property type="match status" value="1"/>
</dbReference>
<reference key="1">
    <citation type="journal article" date="2001" name="Microb. Drug Resist.">
        <title>Annotated draft genomic sequence from a Streptococcus pneumoniae type 19F clinical isolate.</title>
        <authorList>
            <person name="Dopazo J."/>
            <person name="Mendoza A."/>
            <person name="Herrero J."/>
            <person name="Caldara F."/>
            <person name="Humbert Y."/>
            <person name="Friedli L."/>
            <person name="Guerrier M."/>
            <person name="Grand-Schenk E."/>
            <person name="Gandin C."/>
            <person name="de Francesco M."/>
            <person name="Polissi A."/>
            <person name="Buell G."/>
            <person name="Feger G."/>
            <person name="Garcia E."/>
            <person name="Peitsch M."/>
            <person name="Garcia-Bustos J.F."/>
        </authorList>
    </citation>
    <scope>NUCLEOTIDE SEQUENCE [LARGE SCALE GENOMIC DNA]</scope>
    <source>
        <strain>G54</strain>
    </source>
</reference>
<reference key="2">
    <citation type="submission" date="2008-03" db="EMBL/GenBank/DDBJ databases">
        <title>Pneumococcal beta glucoside metabolism investigated by whole genome comparison.</title>
        <authorList>
            <person name="Mulas L."/>
            <person name="Trappetti C."/>
            <person name="Hakenbeck R."/>
            <person name="Iannelli F."/>
            <person name="Pozzi G."/>
            <person name="Davidsen T.M."/>
            <person name="Tettelin H."/>
            <person name="Oggioni M."/>
        </authorList>
    </citation>
    <scope>NUCLEOTIDE SEQUENCE [LARGE SCALE GENOMIC DNA]</scope>
    <source>
        <strain>G54</strain>
    </source>
</reference>
<gene>
    <name evidence="1" type="primary">rplW</name>
    <name type="ordered locus">SPG_0197</name>
</gene>
<proteinExistence type="inferred from homology"/>
<accession>B5E6F7</accession>
<protein>
    <recommendedName>
        <fullName evidence="1">Large ribosomal subunit protein uL23</fullName>
    </recommendedName>
    <alternativeName>
        <fullName evidence="2">50S ribosomal protein L23</fullName>
    </alternativeName>
</protein>
<feature type="chain" id="PRO_1000144609" description="Large ribosomal subunit protein uL23">
    <location>
        <begin position="1"/>
        <end position="98"/>
    </location>
</feature>